<accession>Q7MJ36</accession>
<name>Y2327_VIBVY</name>
<gene>
    <name type="ordered locus">VV2327</name>
</gene>
<sequence>MLRVLGLAGMLMSFNIHAAMISPVSGVKILFANGTEVDEPLEPMEVDAKSAQLVVRYAAELGSGSNQKVFDSAPFVITIDNLSEDIKLYPPKVFSYEQANREFNTSPKWRIEGVSGKEISYSQEKLKGNDGFMPYYGMEALIAKHNEERGIVFSAGVVKAEVVTTDKMVEKPATTKNADALVQLQHWYKQASTEERKAFRKWMVDQE</sequence>
<evidence type="ECO:0000255" key="1">
    <source>
        <dbReference type="HAMAP-Rule" id="MF_00789"/>
    </source>
</evidence>
<reference key="1">
    <citation type="journal article" date="2003" name="Genome Res.">
        <title>Comparative genome analysis of Vibrio vulnificus, a marine pathogen.</title>
        <authorList>
            <person name="Chen C.-Y."/>
            <person name="Wu K.-M."/>
            <person name="Chang Y.-C."/>
            <person name="Chang C.-H."/>
            <person name="Tsai H.-C."/>
            <person name="Liao T.-L."/>
            <person name="Liu Y.-M."/>
            <person name="Chen H.-J."/>
            <person name="Shen A.B.-T."/>
            <person name="Li J.-C."/>
            <person name="Su T.-L."/>
            <person name="Shao C.-P."/>
            <person name="Lee C.-T."/>
            <person name="Hor L.-I."/>
            <person name="Tsai S.-F."/>
        </authorList>
    </citation>
    <scope>NUCLEOTIDE SEQUENCE [LARGE SCALE GENOMIC DNA]</scope>
    <source>
        <strain>YJ016</strain>
    </source>
</reference>
<keyword id="KW-0732">Signal</keyword>
<proteinExistence type="inferred from homology"/>
<feature type="signal peptide" evidence="1">
    <location>
        <begin position="1"/>
        <end position="18"/>
    </location>
</feature>
<feature type="chain" id="PRO_0000036316" description="UPF0319 protein VV2327">
    <location>
        <begin position="19"/>
        <end position="207"/>
    </location>
</feature>
<protein>
    <recommendedName>
        <fullName evidence="1">UPF0319 protein VV2327</fullName>
    </recommendedName>
</protein>
<organism>
    <name type="scientific">Vibrio vulnificus (strain YJ016)</name>
    <dbReference type="NCBI Taxonomy" id="196600"/>
    <lineage>
        <taxon>Bacteria</taxon>
        <taxon>Pseudomonadati</taxon>
        <taxon>Pseudomonadota</taxon>
        <taxon>Gammaproteobacteria</taxon>
        <taxon>Vibrionales</taxon>
        <taxon>Vibrionaceae</taxon>
        <taxon>Vibrio</taxon>
    </lineage>
</organism>
<comment type="similarity">
    <text evidence="1">Belongs to the UPF0319 family.</text>
</comment>
<dbReference type="EMBL" id="BA000037">
    <property type="protein sequence ID" value="BAC95091.1"/>
    <property type="molecule type" value="Genomic_DNA"/>
</dbReference>
<dbReference type="RefSeq" id="WP_011150815.1">
    <property type="nucleotide sequence ID" value="NC_005139.1"/>
</dbReference>
<dbReference type="KEGG" id="vvy:VV2327"/>
<dbReference type="PATRIC" id="fig|196600.6.peg.2338"/>
<dbReference type="HOGENOM" id="CLU_073782_3_0_6"/>
<dbReference type="Proteomes" id="UP000002675">
    <property type="component" value="Chromosome I"/>
</dbReference>
<dbReference type="HAMAP" id="MF_00789">
    <property type="entry name" value="UPF0319"/>
    <property type="match status" value="1"/>
</dbReference>
<dbReference type="InterPro" id="IPR018635">
    <property type="entry name" value="UPF0319"/>
</dbReference>
<dbReference type="PANTHER" id="PTHR38108">
    <property type="entry name" value="UPF0319 PROTEIN YCCT"/>
    <property type="match status" value="1"/>
</dbReference>
<dbReference type="PANTHER" id="PTHR38108:SF1">
    <property type="entry name" value="UPF0319 PROTEIN YCCT"/>
    <property type="match status" value="1"/>
</dbReference>
<dbReference type="Pfam" id="PF09829">
    <property type="entry name" value="DUF2057"/>
    <property type="match status" value="1"/>
</dbReference>